<evidence type="ECO:0000255" key="1">
    <source>
        <dbReference type="HAMAP-Rule" id="MF_01543"/>
    </source>
</evidence>
<keyword id="KW-0067">ATP-binding</keyword>
<keyword id="KW-0436">Ligase</keyword>
<keyword id="KW-0547">Nucleotide-binding</keyword>
<keyword id="KW-0554">One-carbon metabolism</keyword>
<feature type="chain" id="PRO_1000146678" description="Formate--tetrahydrofolate ligase">
    <location>
        <begin position="1"/>
        <end position="557"/>
    </location>
</feature>
<feature type="binding site" evidence="1">
    <location>
        <begin position="66"/>
        <end position="73"/>
    </location>
    <ligand>
        <name>ATP</name>
        <dbReference type="ChEBI" id="CHEBI:30616"/>
    </ligand>
</feature>
<name>FTHS_CLOBK</name>
<reference key="1">
    <citation type="journal article" date="2007" name="PLoS ONE">
        <title>Analysis of the neurotoxin complex genes in Clostridium botulinum A1-A4 and B1 strains: BoNT/A3, /Ba4 and /B1 clusters are located within plasmids.</title>
        <authorList>
            <person name="Smith T.J."/>
            <person name="Hill K.K."/>
            <person name="Foley B.T."/>
            <person name="Detter J.C."/>
            <person name="Munk A.C."/>
            <person name="Bruce D.C."/>
            <person name="Doggett N.A."/>
            <person name="Smith L.A."/>
            <person name="Marks J.D."/>
            <person name="Xie G."/>
            <person name="Brettin T.S."/>
        </authorList>
    </citation>
    <scope>NUCLEOTIDE SEQUENCE [LARGE SCALE GENOMIC DNA]</scope>
    <source>
        <strain>Okra / Type B1</strain>
    </source>
</reference>
<dbReference type="EC" id="6.3.4.3" evidence="1"/>
<dbReference type="EMBL" id="CP000939">
    <property type="protein sequence ID" value="ACA44058.1"/>
    <property type="molecule type" value="Genomic_DNA"/>
</dbReference>
<dbReference type="RefSeq" id="WP_003399652.1">
    <property type="nucleotide sequence ID" value="NC_010516.1"/>
</dbReference>
<dbReference type="SMR" id="B1IGY1"/>
<dbReference type="KEGG" id="cbb:CLD_0967"/>
<dbReference type="HOGENOM" id="CLU_003601_3_3_9"/>
<dbReference type="UniPathway" id="UPA00193"/>
<dbReference type="Proteomes" id="UP000008541">
    <property type="component" value="Chromosome"/>
</dbReference>
<dbReference type="GO" id="GO:0005524">
    <property type="term" value="F:ATP binding"/>
    <property type="evidence" value="ECO:0007669"/>
    <property type="project" value="UniProtKB-UniRule"/>
</dbReference>
<dbReference type="GO" id="GO:0004329">
    <property type="term" value="F:formate-tetrahydrofolate ligase activity"/>
    <property type="evidence" value="ECO:0007669"/>
    <property type="project" value="UniProtKB-UniRule"/>
</dbReference>
<dbReference type="GO" id="GO:0035999">
    <property type="term" value="P:tetrahydrofolate interconversion"/>
    <property type="evidence" value="ECO:0007669"/>
    <property type="project" value="UniProtKB-UniRule"/>
</dbReference>
<dbReference type="CDD" id="cd00477">
    <property type="entry name" value="FTHFS"/>
    <property type="match status" value="1"/>
</dbReference>
<dbReference type="FunFam" id="3.30.1510.10:FF:000001">
    <property type="entry name" value="Formate--tetrahydrofolate ligase"/>
    <property type="match status" value="1"/>
</dbReference>
<dbReference type="FunFam" id="3.10.410.10:FF:000001">
    <property type="entry name" value="Putative formate--tetrahydrofolate ligase"/>
    <property type="match status" value="1"/>
</dbReference>
<dbReference type="Gene3D" id="3.30.1510.10">
    <property type="entry name" value="Domain 2, N(10)-formyltetrahydrofolate synthetase"/>
    <property type="match status" value="1"/>
</dbReference>
<dbReference type="Gene3D" id="3.10.410.10">
    <property type="entry name" value="Formyltetrahydrofolate synthetase, domain 3"/>
    <property type="match status" value="1"/>
</dbReference>
<dbReference type="Gene3D" id="3.40.50.300">
    <property type="entry name" value="P-loop containing nucleotide triphosphate hydrolases"/>
    <property type="match status" value="1"/>
</dbReference>
<dbReference type="HAMAP" id="MF_01543">
    <property type="entry name" value="FTHFS"/>
    <property type="match status" value="1"/>
</dbReference>
<dbReference type="InterPro" id="IPR000559">
    <property type="entry name" value="Formate_THF_ligase"/>
</dbReference>
<dbReference type="InterPro" id="IPR020628">
    <property type="entry name" value="Formate_THF_ligase_CS"/>
</dbReference>
<dbReference type="InterPro" id="IPR027417">
    <property type="entry name" value="P-loop_NTPase"/>
</dbReference>
<dbReference type="NCBIfam" id="NF010030">
    <property type="entry name" value="PRK13505.1"/>
    <property type="match status" value="1"/>
</dbReference>
<dbReference type="Pfam" id="PF01268">
    <property type="entry name" value="FTHFS"/>
    <property type="match status" value="1"/>
</dbReference>
<dbReference type="SUPFAM" id="SSF52540">
    <property type="entry name" value="P-loop containing nucleoside triphosphate hydrolases"/>
    <property type="match status" value="1"/>
</dbReference>
<dbReference type="PROSITE" id="PS00721">
    <property type="entry name" value="FTHFS_1"/>
    <property type="match status" value="1"/>
</dbReference>
<dbReference type="PROSITE" id="PS00722">
    <property type="entry name" value="FTHFS_2"/>
    <property type="match status" value="1"/>
</dbReference>
<organism>
    <name type="scientific">Clostridium botulinum (strain Okra / Type B1)</name>
    <dbReference type="NCBI Taxonomy" id="498213"/>
    <lineage>
        <taxon>Bacteria</taxon>
        <taxon>Bacillati</taxon>
        <taxon>Bacillota</taxon>
        <taxon>Clostridia</taxon>
        <taxon>Eubacteriales</taxon>
        <taxon>Clostridiaceae</taxon>
        <taxon>Clostridium</taxon>
    </lineage>
</organism>
<protein>
    <recommendedName>
        <fullName evidence="1">Formate--tetrahydrofolate ligase</fullName>
        <ecNumber evidence="1">6.3.4.3</ecNumber>
    </recommendedName>
    <alternativeName>
        <fullName evidence="1">Formyltetrahydrofolate synthetase</fullName>
        <shortName evidence="1">FHS</shortName>
        <shortName evidence="1">FTHFS</shortName>
    </alternativeName>
</protein>
<gene>
    <name evidence="1" type="primary">fhs</name>
    <name type="ordered locus">CLD_0967</name>
</gene>
<comment type="catalytic activity">
    <reaction evidence="1">
        <text>(6S)-5,6,7,8-tetrahydrofolate + formate + ATP = (6R)-10-formyltetrahydrofolate + ADP + phosphate</text>
        <dbReference type="Rhea" id="RHEA:20221"/>
        <dbReference type="ChEBI" id="CHEBI:15740"/>
        <dbReference type="ChEBI" id="CHEBI:30616"/>
        <dbReference type="ChEBI" id="CHEBI:43474"/>
        <dbReference type="ChEBI" id="CHEBI:57453"/>
        <dbReference type="ChEBI" id="CHEBI:195366"/>
        <dbReference type="ChEBI" id="CHEBI:456216"/>
        <dbReference type="EC" id="6.3.4.3"/>
    </reaction>
</comment>
<comment type="pathway">
    <text evidence="1">One-carbon metabolism; tetrahydrofolate interconversion.</text>
</comment>
<comment type="similarity">
    <text evidence="1">Belongs to the formate--tetrahydrofolate ligase family.</text>
</comment>
<sequence length="557" mass="60701">MFKSDIEIAQESKMKNIKNIAEKIGLTEEDIDLYGKYKCKISLDVLESNKDKKDGKLILVTAINPTPAGEGKSTVTVGLGQALWKKNKKAVIALREPSLGPVFGIKGGAAGGGYSQVVPMEDINLHFTGDMHAITSANNLLAAAIDNHIHQGNILKIDQRRILFKRVMDMNDRALRNVIVALGGKINGFPREDGFMITVASEIMAILCLAEDLMDLKNKMGEILVAYSTEGKPIYCKDLEVQGAMALLMKDAIKPNLVQTLENTPAIIHGGPFANIAHGCNSILGTKMALKLGDYVITEAGFGADLGAEKFFDIKCRKANLKPNCVVIVATVRALKYNGGIPKENLKEQNMEALSKGIKNLGKHIENVNKFGVPAVVAINKFISDTEEEIEFIKKYCKELGAEVSIAEVWEKGGNGGLELADKVLDTIENKESKFNPIYEETLNIKQKIETIAQEIYGAEGVDYSKEAEKQISEIEKLDLDKKPVCMAKTQYSLSDDAKLLGRPCGFRINVKEVRISNGAGFIVVLTGNVMTMPGLPKKPAANNMDVLSDGNIVGLF</sequence>
<proteinExistence type="inferred from homology"/>
<accession>B1IGY1</accession>